<comment type="function">
    <text evidence="1">Binds together with bS18 to 16S ribosomal RNA.</text>
</comment>
<comment type="similarity">
    <text evidence="1">Belongs to the bacterial ribosomal protein bS6 family.</text>
</comment>
<protein>
    <recommendedName>
        <fullName evidence="1">Small ribosomal subunit protein bS6</fullName>
    </recommendedName>
    <alternativeName>
        <fullName evidence="2">30S ribosomal protein S6</fullName>
    </alternativeName>
</protein>
<reference key="1">
    <citation type="journal article" date="2003" name="Nature">
        <title>Genome sequence of Bacillus cereus and comparative analysis with Bacillus anthracis.</title>
        <authorList>
            <person name="Ivanova N."/>
            <person name="Sorokin A."/>
            <person name="Anderson I."/>
            <person name="Galleron N."/>
            <person name="Candelon B."/>
            <person name="Kapatral V."/>
            <person name="Bhattacharyya A."/>
            <person name="Reznik G."/>
            <person name="Mikhailova N."/>
            <person name="Lapidus A."/>
            <person name="Chu L."/>
            <person name="Mazur M."/>
            <person name="Goltsman E."/>
            <person name="Larsen N."/>
            <person name="D'Souza M."/>
            <person name="Walunas T."/>
            <person name="Grechkin Y."/>
            <person name="Pusch G."/>
            <person name="Haselkorn R."/>
            <person name="Fonstein M."/>
            <person name="Ehrlich S.D."/>
            <person name="Overbeek R."/>
            <person name="Kyrpides N.C."/>
        </authorList>
    </citation>
    <scope>NUCLEOTIDE SEQUENCE [LARGE SCALE GENOMIC DNA]</scope>
    <source>
        <strain>ATCC 14579 / DSM 31 / CCUG 7414 / JCM 2152 / NBRC 15305 / NCIMB 9373 / NCTC 2599 / NRRL B-3711</strain>
    </source>
</reference>
<evidence type="ECO:0000255" key="1">
    <source>
        <dbReference type="HAMAP-Rule" id="MF_00360"/>
    </source>
</evidence>
<evidence type="ECO:0000305" key="2"/>
<name>RS6_BACCR</name>
<dbReference type="EMBL" id="AE016877">
    <property type="protein sequence ID" value="AAP12330.1"/>
    <property type="molecule type" value="Genomic_DNA"/>
</dbReference>
<dbReference type="RefSeq" id="NP_835129.1">
    <property type="nucleotide sequence ID" value="NC_004722.1"/>
</dbReference>
<dbReference type="RefSeq" id="WP_001233778.1">
    <property type="nucleotide sequence ID" value="NZ_CP138336.1"/>
</dbReference>
<dbReference type="SMR" id="Q814G5"/>
<dbReference type="STRING" id="226900.BC_5476"/>
<dbReference type="MetOSite" id="Q814G5"/>
<dbReference type="GeneID" id="83639165"/>
<dbReference type="KEGG" id="bce:BC5476"/>
<dbReference type="PATRIC" id="fig|226900.8.peg.5654"/>
<dbReference type="HOGENOM" id="CLU_113441_5_3_9"/>
<dbReference type="OrthoDB" id="9812702at2"/>
<dbReference type="Proteomes" id="UP000001417">
    <property type="component" value="Chromosome"/>
</dbReference>
<dbReference type="GO" id="GO:0005737">
    <property type="term" value="C:cytoplasm"/>
    <property type="evidence" value="ECO:0007669"/>
    <property type="project" value="UniProtKB-ARBA"/>
</dbReference>
<dbReference type="GO" id="GO:1990904">
    <property type="term" value="C:ribonucleoprotein complex"/>
    <property type="evidence" value="ECO:0007669"/>
    <property type="project" value="UniProtKB-KW"/>
</dbReference>
<dbReference type="GO" id="GO:0005840">
    <property type="term" value="C:ribosome"/>
    <property type="evidence" value="ECO:0007669"/>
    <property type="project" value="UniProtKB-KW"/>
</dbReference>
<dbReference type="GO" id="GO:0070181">
    <property type="term" value="F:small ribosomal subunit rRNA binding"/>
    <property type="evidence" value="ECO:0000318"/>
    <property type="project" value="GO_Central"/>
</dbReference>
<dbReference type="GO" id="GO:0003735">
    <property type="term" value="F:structural constituent of ribosome"/>
    <property type="evidence" value="ECO:0000318"/>
    <property type="project" value="GO_Central"/>
</dbReference>
<dbReference type="GO" id="GO:0006412">
    <property type="term" value="P:translation"/>
    <property type="evidence" value="ECO:0007669"/>
    <property type="project" value="UniProtKB-UniRule"/>
</dbReference>
<dbReference type="CDD" id="cd00473">
    <property type="entry name" value="bS6"/>
    <property type="match status" value="1"/>
</dbReference>
<dbReference type="FunFam" id="3.30.70.60:FF:000002">
    <property type="entry name" value="30S ribosomal protein S6"/>
    <property type="match status" value="1"/>
</dbReference>
<dbReference type="Gene3D" id="3.30.70.60">
    <property type="match status" value="1"/>
</dbReference>
<dbReference type="HAMAP" id="MF_00360">
    <property type="entry name" value="Ribosomal_bS6"/>
    <property type="match status" value="1"/>
</dbReference>
<dbReference type="InterPro" id="IPR000529">
    <property type="entry name" value="Ribosomal_bS6"/>
</dbReference>
<dbReference type="InterPro" id="IPR020815">
    <property type="entry name" value="Ribosomal_bS6_CS"/>
</dbReference>
<dbReference type="InterPro" id="IPR035980">
    <property type="entry name" value="Ribosomal_bS6_sf"/>
</dbReference>
<dbReference type="InterPro" id="IPR020814">
    <property type="entry name" value="Ribosomal_S6_plastid/chlpt"/>
</dbReference>
<dbReference type="InterPro" id="IPR014717">
    <property type="entry name" value="Transl_elong_EF1B/ribsomal_bS6"/>
</dbReference>
<dbReference type="NCBIfam" id="TIGR00166">
    <property type="entry name" value="S6"/>
    <property type="match status" value="1"/>
</dbReference>
<dbReference type="PANTHER" id="PTHR21011">
    <property type="entry name" value="MITOCHONDRIAL 28S RIBOSOMAL PROTEIN S6"/>
    <property type="match status" value="1"/>
</dbReference>
<dbReference type="PANTHER" id="PTHR21011:SF1">
    <property type="entry name" value="SMALL RIBOSOMAL SUBUNIT PROTEIN BS6M"/>
    <property type="match status" value="1"/>
</dbReference>
<dbReference type="Pfam" id="PF01250">
    <property type="entry name" value="Ribosomal_S6"/>
    <property type="match status" value="1"/>
</dbReference>
<dbReference type="SUPFAM" id="SSF54995">
    <property type="entry name" value="Ribosomal protein S6"/>
    <property type="match status" value="1"/>
</dbReference>
<dbReference type="PROSITE" id="PS01048">
    <property type="entry name" value="RIBOSOMAL_S6"/>
    <property type="match status" value="1"/>
</dbReference>
<organism>
    <name type="scientific">Bacillus cereus (strain ATCC 14579 / DSM 31 / CCUG 7414 / JCM 2152 / NBRC 15305 / NCIMB 9373 / NCTC 2599 / NRRL B-3711)</name>
    <dbReference type="NCBI Taxonomy" id="226900"/>
    <lineage>
        <taxon>Bacteria</taxon>
        <taxon>Bacillati</taxon>
        <taxon>Bacillota</taxon>
        <taxon>Bacilli</taxon>
        <taxon>Bacillales</taxon>
        <taxon>Bacillaceae</taxon>
        <taxon>Bacillus</taxon>
        <taxon>Bacillus cereus group</taxon>
    </lineage>
</organism>
<sequence>MRKYEIMYIIRPGVEEEAQKALVERFAGVLTNNGAEIINTKEWGKRRLAYEINDLREGFYMILNVKSNAEAINEFDRLAKINEDILRHIVVKEEEK</sequence>
<proteinExistence type="inferred from homology"/>
<feature type="chain" id="PRO_0000176719" description="Small ribosomal subunit protein bS6">
    <location>
        <begin position="1"/>
        <end position="96"/>
    </location>
</feature>
<accession>Q814G5</accession>
<keyword id="KW-1185">Reference proteome</keyword>
<keyword id="KW-0687">Ribonucleoprotein</keyword>
<keyword id="KW-0689">Ribosomal protein</keyword>
<keyword id="KW-0694">RNA-binding</keyword>
<keyword id="KW-0699">rRNA-binding</keyword>
<gene>
    <name evidence="1" type="primary">rpsF</name>
    <name type="ordered locus">BC_5476</name>
</gene>